<accession>P0C0N5</accession>
<accession>O68161</accession>
<accession>O86859</accession>
<dbReference type="EC" id="3.4.-.-" evidence="1"/>
<dbReference type="EMBL" id="AE015929">
    <property type="protein sequence ID" value="AAO05234.1"/>
    <property type="molecule type" value="Genomic_DNA"/>
</dbReference>
<dbReference type="RefSeq" id="NP_765190.1">
    <property type="nucleotide sequence ID" value="NC_004461.1"/>
</dbReference>
<dbReference type="RefSeq" id="WP_001830005.1">
    <property type="nucleotide sequence ID" value="NZ_WBME01000022.1"/>
</dbReference>
<dbReference type="SMR" id="P0C0N5"/>
<dbReference type="MEROPS" id="C75.001"/>
<dbReference type="KEGG" id="sep:SE_1635"/>
<dbReference type="PATRIC" id="fig|176280.10.peg.1600"/>
<dbReference type="eggNOG" id="COG4512">
    <property type="taxonomic scope" value="Bacteria"/>
</dbReference>
<dbReference type="HOGENOM" id="CLU_098969_2_2_9"/>
<dbReference type="OrthoDB" id="2183538at2"/>
<dbReference type="Proteomes" id="UP000001411">
    <property type="component" value="Chromosome"/>
</dbReference>
<dbReference type="GO" id="GO:0005886">
    <property type="term" value="C:plasma membrane"/>
    <property type="evidence" value="ECO:0007669"/>
    <property type="project" value="UniProtKB-SubCell"/>
</dbReference>
<dbReference type="GO" id="GO:0008233">
    <property type="term" value="F:peptidase activity"/>
    <property type="evidence" value="ECO:0007669"/>
    <property type="project" value="UniProtKB-UniRule"/>
</dbReference>
<dbReference type="GO" id="GO:0006508">
    <property type="term" value="P:proteolysis"/>
    <property type="evidence" value="ECO:0007669"/>
    <property type="project" value="UniProtKB-KW"/>
</dbReference>
<dbReference type="GO" id="GO:0009372">
    <property type="term" value="P:quorum sensing"/>
    <property type="evidence" value="ECO:0007669"/>
    <property type="project" value="UniProtKB-UniRule"/>
</dbReference>
<dbReference type="HAMAP" id="MF_00784">
    <property type="entry name" value="AgrB"/>
    <property type="match status" value="1"/>
</dbReference>
<dbReference type="InterPro" id="IPR006741">
    <property type="entry name" value="AgrB"/>
</dbReference>
<dbReference type="Pfam" id="PF04647">
    <property type="entry name" value="AgrB"/>
    <property type="match status" value="1"/>
</dbReference>
<dbReference type="SMART" id="SM00793">
    <property type="entry name" value="AgrB"/>
    <property type="match status" value="1"/>
</dbReference>
<organism>
    <name type="scientific">Staphylococcus epidermidis (strain ATCC 12228 / FDA PCI 1200)</name>
    <dbReference type="NCBI Taxonomy" id="176280"/>
    <lineage>
        <taxon>Bacteria</taxon>
        <taxon>Bacillati</taxon>
        <taxon>Bacillota</taxon>
        <taxon>Bacilli</taxon>
        <taxon>Bacillales</taxon>
        <taxon>Staphylococcaceae</taxon>
        <taxon>Staphylococcus</taxon>
    </lineage>
</organism>
<comment type="function">
    <text evidence="1">Essential for the production of a quorum sensing system signal molecule, the autoinducing peptide (AIP). This quorum sensing system is responsible for the regulation of the expression of virulence factor genes. Involved in the proteolytic processing of AgrD, the precursor of AIP.</text>
</comment>
<comment type="subcellular location">
    <subcellularLocation>
        <location evidence="1">Cell membrane</location>
        <topology evidence="1">Multi-pass membrane protein</topology>
    </subcellularLocation>
</comment>
<comment type="similarity">
    <text evidence="1">Belongs to the AgrB family.</text>
</comment>
<gene>
    <name evidence="1" type="primary">agrB</name>
    <name type="ordered locus">SE_1635</name>
</gene>
<evidence type="ECO:0000255" key="1">
    <source>
        <dbReference type="HAMAP-Rule" id="MF_00784"/>
    </source>
</evidence>
<proteinExistence type="inferred from homology"/>
<keyword id="KW-1003">Cell membrane</keyword>
<keyword id="KW-0378">Hydrolase</keyword>
<keyword id="KW-0472">Membrane</keyword>
<keyword id="KW-0645">Protease</keyword>
<keyword id="KW-0673">Quorum sensing</keyword>
<keyword id="KW-0812">Transmembrane</keyword>
<keyword id="KW-1133">Transmembrane helix</keyword>
<keyword id="KW-0843">Virulence</keyword>
<protein>
    <recommendedName>
        <fullName evidence="1">Accessory gene regulator protein B</fullName>
        <ecNumber evidence="1">3.4.-.-</ecNumber>
    </recommendedName>
</protein>
<feature type="chain" id="PRO_0000168127" description="Accessory gene regulator protein B">
    <location>
        <begin position="1"/>
        <end position="194"/>
    </location>
</feature>
<feature type="transmembrane region" description="Helical" evidence="1">
    <location>
        <begin position="44"/>
        <end position="64"/>
    </location>
</feature>
<feature type="transmembrane region" description="Helical" evidence="1">
    <location>
        <begin position="80"/>
        <end position="100"/>
    </location>
</feature>
<feature type="transmembrane region" description="Helical" evidence="1">
    <location>
        <begin position="107"/>
        <end position="127"/>
    </location>
</feature>
<feature type="transmembrane region" description="Helical" evidence="1">
    <location>
        <begin position="142"/>
        <end position="162"/>
    </location>
</feature>
<feature type="transmembrane region" description="Helical" evidence="1">
    <location>
        <begin position="163"/>
        <end position="183"/>
    </location>
</feature>
<sequence>MKIIDKKIEQFAQYLQRKNNLDHIQFLKIRLGMQVLAINIEKSIVVYGLAIIFHTFFYTLLTHLSYFLIRRHAHGTHANSSLLCHIQNIIFFIIFPYLIIKLDINYFVLLSMALVGLIITILYAPAATKKQPIPRRLVKRKKILSIFLYCTIVVISLVTKEPVNKLILFGVILESLTLLPIFFPKEDINHGKHF</sequence>
<reference key="1">
    <citation type="journal article" date="2003" name="Mol. Microbiol.">
        <title>Genome-based analysis of virulence genes in a non-biofilm-forming Staphylococcus epidermidis strain (ATCC 12228).</title>
        <authorList>
            <person name="Zhang Y.-Q."/>
            <person name="Ren S.-X."/>
            <person name="Li H.-L."/>
            <person name="Wang Y.-X."/>
            <person name="Fu G."/>
            <person name="Yang J."/>
            <person name="Qin Z.-Q."/>
            <person name="Miao Y.-G."/>
            <person name="Wang W.-Y."/>
            <person name="Chen R.-S."/>
            <person name="Shen Y."/>
            <person name="Chen Z."/>
            <person name="Yuan Z.-H."/>
            <person name="Zhao G.-P."/>
            <person name="Qu D."/>
            <person name="Danchin A."/>
            <person name="Wen Y.-M."/>
        </authorList>
    </citation>
    <scope>NUCLEOTIDE SEQUENCE [LARGE SCALE GENOMIC DNA]</scope>
    <source>
        <strain>ATCC 12228 / FDA PCI 1200</strain>
    </source>
</reference>
<name>AGRB_STAES</name>